<comment type="catalytic activity">
    <reaction evidence="1">
        <text>tRNA(Gly) + glycine + ATP = glycyl-tRNA(Gly) + AMP + diphosphate</text>
        <dbReference type="Rhea" id="RHEA:16013"/>
        <dbReference type="Rhea" id="RHEA-COMP:9664"/>
        <dbReference type="Rhea" id="RHEA-COMP:9683"/>
        <dbReference type="ChEBI" id="CHEBI:30616"/>
        <dbReference type="ChEBI" id="CHEBI:33019"/>
        <dbReference type="ChEBI" id="CHEBI:57305"/>
        <dbReference type="ChEBI" id="CHEBI:78442"/>
        <dbReference type="ChEBI" id="CHEBI:78522"/>
        <dbReference type="ChEBI" id="CHEBI:456215"/>
        <dbReference type="EC" id="6.1.1.14"/>
    </reaction>
</comment>
<comment type="subunit">
    <text evidence="1">Tetramer of two alpha and two beta subunits.</text>
</comment>
<comment type="subcellular location">
    <subcellularLocation>
        <location evidence="1">Cytoplasm</location>
    </subcellularLocation>
</comment>
<comment type="similarity">
    <text evidence="1">Belongs to the class-II aminoacyl-tRNA synthetase family.</text>
</comment>
<keyword id="KW-0030">Aminoacyl-tRNA synthetase</keyword>
<keyword id="KW-0067">ATP-binding</keyword>
<keyword id="KW-0963">Cytoplasm</keyword>
<keyword id="KW-0436">Ligase</keyword>
<keyword id="KW-0547">Nucleotide-binding</keyword>
<keyword id="KW-0648">Protein biosynthesis</keyword>
<feature type="chain" id="PRO_1000125554" description="Glycine--tRNA ligase alpha subunit">
    <location>
        <begin position="1"/>
        <end position="301"/>
    </location>
</feature>
<organism>
    <name type="scientific">Shewanella baltica (strain OS223)</name>
    <dbReference type="NCBI Taxonomy" id="407976"/>
    <lineage>
        <taxon>Bacteria</taxon>
        <taxon>Pseudomonadati</taxon>
        <taxon>Pseudomonadota</taxon>
        <taxon>Gammaproteobacteria</taxon>
        <taxon>Alteromonadales</taxon>
        <taxon>Shewanellaceae</taxon>
        <taxon>Shewanella</taxon>
    </lineage>
</organism>
<accession>B8E3Q6</accession>
<evidence type="ECO:0000255" key="1">
    <source>
        <dbReference type="HAMAP-Rule" id="MF_00254"/>
    </source>
</evidence>
<gene>
    <name evidence="1" type="primary">glyQ</name>
    <name type="ordered locus">Sbal223_0013</name>
</gene>
<protein>
    <recommendedName>
        <fullName evidence="1">Glycine--tRNA ligase alpha subunit</fullName>
        <ecNumber evidence="1">6.1.1.14</ecNumber>
    </recommendedName>
    <alternativeName>
        <fullName evidence="1">Glycyl-tRNA synthetase alpha subunit</fullName>
        <shortName evidence="1">GlyRS</shortName>
    </alternativeName>
</protein>
<dbReference type="EC" id="6.1.1.14" evidence="1"/>
<dbReference type="EMBL" id="CP001252">
    <property type="protein sequence ID" value="ACK44557.1"/>
    <property type="molecule type" value="Genomic_DNA"/>
</dbReference>
<dbReference type="RefSeq" id="WP_006083814.1">
    <property type="nucleotide sequence ID" value="NC_011663.1"/>
</dbReference>
<dbReference type="SMR" id="B8E3Q6"/>
<dbReference type="GeneID" id="11770383"/>
<dbReference type="KEGG" id="sbp:Sbal223_0013"/>
<dbReference type="HOGENOM" id="CLU_057066_1_0_6"/>
<dbReference type="Proteomes" id="UP000002507">
    <property type="component" value="Chromosome"/>
</dbReference>
<dbReference type="GO" id="GO:0005829">
    <property type="term" value="C:cytosol"/>
    <property type="evidence" value="ECO:0007669"/>
    <property type="project" value="TreeGrafter"/>
</dbReference>
<dbReference type="GO" id="GO:0005524">
    <property type="term" value="F:ATP binding"/>
    <property type="evidence" value="ECO:0007669"/>
    <property type="project" value="UniProtKB-UniRule"/>
</dbReference>
<dbReference type="GO" id="GO:0004820">
    <property type="term" value="F:glycine-tRNA ligase activity"/>
    <property type="evidence" value="ECO:0007669"/>
    <property type="project" value="UniProtKB-UniRule"/>
</dbReference>
<dbReference type="GO" id="GO:0006426">
    <property type="term" value="P:glycyl-tRNA aminoacylation"/>
    <property type="evidence" value="ECO:0007669"/>
    <property type="project" value="UniProtKB-UniRule"/>
</dbReference>
<dbReference type="CDD" id="cd00733">
    <property type="entry name" value="GlyRS_alpha_core"/>
    <property type="match status" value="1"/>
</dbReference>
<dbReference type="FunFam" id="3.30.930.10:FF:000006">
    <property type="entry name" value="Glycine--tRNA ligase alpha subunit"/>
    <property type="match status" value="1"/>
</dbReference>
<dbReference type="Gene3D" id="3.30.930.10">
    <property type="entry name" value="Bira Bifunctional Protein, Domain 2"/>
    <property type="match status" value="1"/>
</dbReference>
<dbReference type="Gene3D" id="1.20.58.180">
    <property type="entry name" value="Class II aaRS and biotin synthetases, domain 2"/>
    <property type="match status" value="1"/>
</dbReference>
<dbReference type="HAMAP" id="MF_00254">
    <property type="entry name" value="Gly_tRNA_synth_alpha"/>
    <property type="match status" value="1"/>
</dbReference>
<dbReference type="InterPro" id="IPR045864">
    <property type="entry name" value="aa-tRNA-synth_II/BPL/LPL"/>
</dbReference>
<dbReference type="InterPro" id="IPR006194">
    <property type="entry name" value="Gly-tRNA-synth_heterodimer"/>
</dbReference>
<dbReference type="InterPro" id="IPR002310">
    <property type="entry name" value="Gly-tRNA_ligase_asu"/>
</dbReference>
<dbReference type="NCBIfam" id="TIGR00388">
    <property type="entry name" value="glyQ"/>
    <property type="match status" value="1"/>
</dbReference>
<dbReference type="NCBIfam" id="NF006827">
    <property type="entry name" value="PRK09348.1"/>
    <property type="match status" value="1"/>
</dbReference>
<dbReference type="PANTHER" id="PTHR30075:SF2">
    <property type="entry name" value="GLYCINE--TRNA LIGASE, CHLOROPLASTIC_MITOCHONDRIAL 2"/>
    <property type="match status" value="1"/>
</dbReference>
<dbReference type="PANTHER" id="PTHR30075">
    <property type="entry name" value="GLYCYL-TRNA SYNTHETASE"/>
    <property type="match status" value="1"/>
</dbReference>
<dbReference type="Pfam" id="PF02091">
    <property type="entry name" value="tRNA-synt_2e"/>
    <property type="match status" value="1"/>
</dbReference>
<dbReference type="PRINTS" id="PR01044">
    <property type="entry name" value="TRNASYNTHGA"/>
</dbReference>
<dbReference type="SUPFAM" id="SSF55681">
    <property type="entry name" value="Class II aaRS and biotin synthetases"/>
    <property type="match status" value="1"/>
</dbReference>
<dbReference type="PROSITE" id="PS50861">
    <property type="entry name" value="AA_TRNA_LIGASE_II_GLYAB"/>
    <property type="match status" value="1"/>
</dbReference>
<sequence>MTTKHDVKTFQGFILTLQEYWAQQGCAIVQPLDMEVGAGTFHPQTFLRSLGPEPMSSAYVQPSRRPTDGRYGENPNRLQHYYQFQVVLKPSPDNIQELYLGSLQALGIDTQIHDIRFVEDNWESPTLGAWGLGWEIWLNGMEVTQFTYFQQVGGIECSPVTGEITYGLERLAMYIQGVDSVYDLVWTDGPLGRITYGDVFHQNEVEQSTYNFEHADVDFMFTLFDQCEKMCQHLLSLEKPLPLPAYEQVMKASHAFNLLDARHAISVTERQRYILRVRTMAKAVAESYYQAREALGFPMCK</sequence>
<name>SYGA_SHEB2</name>
<reference key="1">
    <citation type="submission" date="2008-12" db="EMBL/GenBank/DDBJ databases">
        <title>Complete sequence of chromosome of Shewanella baltica OS223.</title>
        <authorList>
            <consortium name="US DOE Joint Genome Institute"/>
            <person name="Lucas S."/>
            <person name="Copeland A."/>
            <person name="Lapidus A."/>
            <person name="Glavina del Rio T."/>
            <person name="Dalin E."/>
            <person name="Tice H."/>
            <person name="Bruce D."/>
            <person name="Goodwin L."/>
            <person name="Pitluck S."/>
            <person name="Chertkov O."/>
            <person name="Meincke L."/>
            <person name="Brettin T."/>
            <person name="Detter J.C."/>
            <person name="Han C."/>
            <person name="Kuske C.R."/>
            <person name="Larimer F."/>
            <person name="Land M."/>
            <person name="Hauser L."/>
            <person name="Kyrpides N."/>
            <person name="Ovchinnikova G."/>
            <person name="Brettar I."/>
            <person name="Rodrigues J."/>
            <person name="Konstantinidis K."/>
            <person name="Tiedje J."/>
        </authorList>
    </citation>
    <scope>NUCLEOTIDE SEQUENCE [LARGE SCALE GENOMIC DNA]</scope>
    <source>
        <strain>OS223</strain>
    </source>
</reference>
<proteinExistence type="inferred from homology"/>